<comment type="function">
    <text evidence="1">The alpha subunit is responsible for the aldol cleavage of indoleglycerol phosphate to indole and glyceraldehyde 3-phosphate.</text>
</comment>
<comment type="catalytic activity">
    <reaction evidence="1">
        <text>(1S,2R)-1-C-(indol-3-yl)glycerol 3-phosphate + L-serine = D-glyceraldehyde 3-phosphate + L-tryptophan + H2O</text>
        <dbReference type="Rhea" id="RHEA:10532"/>
        <dbReference type="ChEBI" id="CHEBI:15377"/>
        <dbReference type="ChEBI" id="CHEBI:33384"/>
        <dbReference type="ChEBI" id="CHEBI:57912"/>
        <dbReference type="ChEBI" id="CHEBI:58866"/>
        <dbReference type="ChEBI" id="CHEBI:59776"/>
        <dbReference type="EC" id="4.2.1.20"/>
    </reaction>
</comment>
<comment type="pathway">
    <text evidence="1">Amino-acid biosynthesis; L-tryptophan biosynthesis; L-tryptophan from chorismate: step 5/5.</text>
</comment>
<comment type="subunit">
    <text evidence="1">Tetramer of two alpha and two beta chains.</text>
</comment>
<comment type="similarity">
    <text evidence="1">Belongs to the TrpA family.</text>
</comment>
<sequence>MERYESLFTQLKERKEGAFIPFVTLGDPGIEQSLKIIDTLIEAGADALELGIPFSDPLADGPTIQNATLRAFAAGVTPAQCFEVLALIRQKHPTIPIGLLMYANLVFNKGIDEFYAECEKVGVDSVLVADVPVEESAPFRQAALRHNVAPIFICPPNADDDLLRQIASYGRGYTYLLSRAGVTGAENRAALPLNHLVAKLKEYNAAPPLQGFGISAPDQVKAAIDAGAAGAISGSAIVKIIEQHINEPEKMLAALKAFVQPMKAATRS</sequence>
<dbReference type="EC" id="4.2.1.20" evidence="1"/>
<dbReference type="EMBL" id="CU928162">
    <property type="protein sequence ID" value="CAR07665.2"/>
    <property type="molecule type" value="Genomic_DNA"/>
</dbReference>
<dbReference type="RefSeq" id="WP_000443097.1">
    <property type="nucleotide sequence ID" value="NC_011745.1"/>
</dbReference>
<dbReference type="SMR" id="B7MU99"/>
<dbReference type="KEGG" id="ecq:ECED1_1467"/>
<dbReference type="HOGENOM" id="CLU_016734_0_4_6"/>
<dbReference type="UniPathway" id="UPA00035">
    <property type="reaction ID" value="UER00044"/>
</dbReference>
<dbReference type="Proteomes" id="UP000000748">
    <property type="component" value="Chromosome"/>
</dbReference>
<dbReference type="GO" id="GO:0005829">
    <property type="term" value="C:cytosol"/>
    <property type="evidence" value="ECO:0007669"/>
    <property type="project" value="TreeGrafter"/>
</dbReference>
<dbReference type="GO" id="GO:0004834">
    <property type="term" value="F:tryptophan synthase activity"/>
    <property type="evidence" value="ECO:0007669"/>
    <property type="project" value="UniProtKB-UniRule"/>
</dbReference>
<dbReference type="CDD" id="cd04724">
    <property type="entry name" value="Tryptophan_synthase_alpha"/>
    <property type="match status" value="1"/>
</dbReference>
<dbReference type="FunFam" id="3.20.20.70:FF:000037">
    <property type="entry name" value="Tryptophan synthase alpha chain"/>
    <property type="match status" value="1"/>
</dbReference>
<dbReference type="Gene3D" id="3.20.20.70">
    <property type="entry name" value="Aldolase class I"/>
    <property type="match status" value="1"/>
</dbReference>
<dbReference type="HAMAP" id="MF_00131">
    <property type="entry name" value="Trp_synth_alpha"/>
    <property type="match status" value="1"/>
</dbReference>
<dbReference type="InterPro" id="IPR013785">
    <property type="entry name" value="Aldolase_TIM"/>
</dbReference>
<dbReference type="InterPro" id="IPR011060">
    <property type="entry name" value="RibuloseP-bd_barrel"/>
</dbReference>
<dbReference type="InterPro" id="IPR018204">
    <property type="entry name" value="Trp_synthase_alpha_AS"/>
</dbReference>
<dbReference type="InterPro" id="IPR002028">
    <property type="entry name" value="Trp_synthase_suA"/>
</dbReference>
<dbReference type="NCBIfam" id="TIGR00262">
    <property type="entry name" value="trpA"/>
    <property type="match status" value="1"/>
</dbReference>
<dbReference type="PANTHER" id="PTHR43406:SF1">
    <property type="entry name" value="TRYPTOPHAN SYNTHASE ALPHA CHAIN, CHLOROPLASTIC"/>
    <property type="match status" value="1"/>
</dbReference>
<dbReference type="PANTHER" id="PTHR43406">
    <property type="entry name" value="TRYPTOPHAN SYNTHASE, ALPHA CHAIN"/>
    <property type="match status" value="1"/>
</dbReference>
<dbReference type="Pfam" id="PF00290">
    <property type="entry name" value="Trp_syntA"/>
    <property type="match status" value="1"/>
</dbReference>
<dbReference type="SUPFAM" id="SSF51366">
    <property type="entry name" value="Ribulose-phoshate binding barrel"/>
    <property type="match status" value="1"/>
</dbReference>
<dbReference type="PROSITE" id="PS00167">
    <property type="entry name" value="TRP_SYNTHASE_ALPHA"/>
    <property type="match status" value="1"/>
</dbReference>
<gene>
    <name evidence="1" type="primary">trpA</name>
    <name type="ordered locus">ECED1_1467</name>
</gene>
<evidence type="ECO:0000255" key="1">
    <source>
        <dbReference type="HAMAP-Rule" id="MF_00131"/>
    </source>
</evidence>
<proteinExistence type="inferred from homology"/>
<organism>
    <name type="scientific">Escherichia coli O81 (strain ED1a)</name>
    <dbReference type="NCBI Taxonomy" id="585397"/>
    <lineage>
        <taxon>Bacteria</taxon>
        <taxon>Pseudomonadati</taxon>
        <taxon>Pseudomonadota</taxon>
        <taxon>Gammaproteobacteria</taxon>
        <taxon>Enterobacterales</taxon>
        <taxon>Enterobacteriaceae</taxon>
        <taxon>Escherichia</taxon>
    </lineage>
</organism>
<accession>B7MU99</accession>
<protein>
    <recommendedName>
        <fullName evidence="1">Tryptophan synthase alpha chain</fullName>
        <ecNumber evidence="1">4.2.1.20</ecNumber>
    </recommendedName>
</protein>
<reference key="1">
    <citation type="journal article" date="2009" name="PLoS Genet.">
        <title>Organised genome dynamics in the Escherichia coli species results in highly diverse adaptive paths.</title>
        <authorList>
            <person name="Touchon M."/>
            <person name="Hoede C."/>
            <person name="Tenaillon O."/>
            <person name="Barbe V."/>
            <person name="Baeriswyl S."/>
            <person name="Bidet P."/>
            <person name="Bingen E."/>
            <person name="Bonacorsi S."/>
            <person name="Bouchier C."/>
            <person name="Bouvet O."/>
            <person name="Calteau A."/>
            <person name="Chiapello H."/>
            <person name="Clermont O."/>
            <person name="Cruveiller S."/>
            <person name="Danchin A."/>
            <person name="Diard M."/>
            <person name="Dossat C."/>
            <person name="Karoui M.E."/>
            <person name="Frapy E."/>
            <person name="Garry L."/>
            <person name="Ghigo J.M."/>
            <person name="Gilles A.M."/>
            <person name="Johnson J."/>
            <person name="Le Bouguenec C."/>
            <person name="Lescat M."/>
            <person name="Mangenot S."/>
            <person name="Martinez-Jehanne V."/>
            <person name="Matic I."/>
            <person name="Nassif X."/>
            <person name="Oztas S."/>
            <person name="Petit M.A."/>
            <person name="Pichon C."/>
            <person name="Rouy Z."/>
            <person name="Ruf C.S."/>
            <person name="Schneider D."/>
            <person name="Tourret J."/>
            <person name="Vacherie B."/>
            <person name="Vallenet D."/>
            <person name="Medigue C."/>
            <person name="Rocha E.P.C."/>
            <person name="Denamur E."/>
        </authorList>
    </citation>
    <scope>NUCLEOTIDE SEQUENCE [LARGE SCALE GENOMIC DNA]</scope>
    <source>
        <strain>ED1a</strain>
    </source>
</reference>
<keyword id="KW-0028">Amino-acid biosynthesis</keyword>
<keyword id="KW-0057">Aromatic amino acid biosynthesis</keyword>
<keyword id="KW-0456">Lyase</keyword>
<keyword id="KW-0822">Tryptophan biosynthesis</keyword>
<name>TRPA_ECO81</name>
<feature type="chain" id="PRO_1000198713" description="Tryptophan synthase alpha chain">
    <location>
        <begin position="1"/>
        <end position="268"/>
    </location>
</feature>
<feature type="active site" description="Proton acceptor" evidence="1">
    <location>
        <position position="49"/>
    </location>
</feature>
<feature type="active site" description="Proton acceptor" evidence="1">
    <location>
        <position position="60"/>
    </location>
</feature>